<dbReference type="EC" id="7.1.1.9"/>
<dbReference type="EMBL" id="L28677">
    <property type="protein sequence ID" value="AAA32102.2"/>
    <property type="molecule type" value="Genomic_DNA"/>
</dbReference>
<dbReference type="EMBL" id="X06133">
    <property type="protein sequence ID" value="CAB57808.1"/>
    <property type="molecule type" value="Genomic_DNA"/>
</dbReference>
<dbReference type="PIR" id="S00742">
    <property type="entry name" value="S00742"/>
</dbReference>
<dbReference type="SMR" id="P11947"/>
<dbReference type="UniPathway" id="UPA00705"/>
<dbReference type="GO" id="GO:0005743">
    <property type="term" value="C:mitochondrial inner membrane"/>
    <property type="evidence" value="ECO:0007669"/>
    <property type="project" value="UniProtKB-SubCell"/>
</dbReference>
<dbReference type="GO" id="GO:0004129">
    <property type="term" value="F:cytochrome-c oxidase activity"/>
    <property type="evidence" value="ECO:0007669"/>
    <property type="project" value="UniProtKB-EC"/>
</dbReference>
<dbReference type="GO" id="GO:0020037">
    <property type="term" value="F:heme binding"/>
    <property type="evidence" value="ECO:0007669"/>
    <property type="project" value="InterPro"/>
</dbReference>
<dbReference type="GO" id="GO:0046872">
    <property type="term" value="F:metal ion binding"/>
    <property type="evidence" value="ECO:0007669"/>
    <property type="project" value="UniProtKB-KW"/>
</dbReference>
<dbReference type="GO" id="GO:0015990">
    <property type="term" value="P:electron transport coupled proton transport"/>
    <property type="evidence" value="ECO:0007669"/>
    <property type="project" value="TreeGrafter"/>
</dbReference>
<dbReference type="GO" id="GO:0006123">
    <property type="term" value="P:mitochondrial electron transport, cytochrome c to oxygen"/>
    <property type="evidence" value="ECO:0007669"/>
    <property type="project" value="TreeGrafter"/>
</dbReference>
<dbReference type="CDD" id="cd00919">
    <property type="entry name" value="Heme_Cu_Oxidase_I"/>
    <property type="match status" value="1"/>
</dbReference>
<dbReference type="Gene3D" id="1.20.210.10">
    <property type="entry name" value="Cytochrome c oxidase-like, subunit I domain"/>
    <property type="match status" value="2"/>
</dbReference>
<dbReference type="InterPro" id="IPR023616">
    <property type="entry name" value="Cyt_c_oxase-like_su1_dom"/>
</dbReference>
<dbReference type="InterPro" id="IPR036927">
    <property type="entry name" value="Cyt_c_oxase-like_su1_sf"/>
</dbReference>
<dbReference type="InterPro" id="IPR000883">
    <property type="entry name" value="Cyt_C_Oxase_1"/>
</dbReference>
<dbReference type="InterPro" id="IPR023615">
    <property type="entry name" value="Cyt_c_Oxase_su1_BS"/>
</dbReference>
<dbReference type="PANTHER" id="PTHR10422">
    <property type="entry name" value="CYTOCHROME C OXIDASE SUBUNIT 1"/>
    <property type="match status" value="1"/>
</dbReference>
<dbReference type="PANTHER" id="PTHR10422:SF18">
    <property type="entry name" value="CYTOCHROME C OXIDASE SUBUNIT 1"/>
    <property type="match status" value="1"/>
</dbReference>
<dbReference type="Pfam" id="PF00115">
    <property type="entry name" value="COX1"/>
    <property type="match status" value="2"/>
</dbReference>
<dbReference type="PRINTS" id="PR01165">
    <property type="entry name" value="CYCOXIDASEI"/>
</dbReference>
<dbReference type="SUPFAM" id="SSF81442">
    <property type="entry name" value="Cytochrome c oxidase subunit I-like"/>
    <property type="match status" value="1"/>
</dbReference>
<dbReference type="PROSITE" id="PS50855">
    <property type="entry name" value="COX1"/>
    <property type="match status" value="1"/>
</dbReference>
<dbReference type="PROSITE" id="PS00077">
    <property type="entry name" value="COX1_CUB"/>
    <property type="match status" value="1"/>
</dbReference>
<sequence>MLYIFNSFDNMWVDFIEQTKSFKVSVNNYFYYLNKIKKLFTYLNDLRKHILKKYVYTINHKRIAINYLYFSMVTGLSGAALATMIRMELAHPESPFFKGDSLRYLQVVTAHGLIMVFFVVVPILFGGFANFLIPYHVGSKDVAYPRLNSIGFWIQPCGYILLAKIGFLRPQFWRYYDKTSFSFPFLEKMKYNQYKEYKNDYLFYLDFLKKEITDDHSFFWKARKVIKLPQYSVFSFVPLKLMMWKTMINYPESFWYAASRVVQSRRKKVFVTKCSARTLTTAGWTFITPFSSNIKYTGVGSQDILILSVVFAGISTTISFTNLLITRRTLAMPGMRHRRVLMPFVTISIFLTLRMLATITPVLGAAVIMMAFDRHWQTTFFEYAYGGDPILSQHLFWFFGHPEVYVLIIPTFGFINMIVPHNNTRRVASKHHMIWAIYVMAYMGYLVWGHHMYLVGLDHRSRTMYSTITIMISMPATIKVVNWTLSLVNGALKVDLPFLFSMSFLLLFLVAGFTGMWLSHVSLNVSMHDTFYVVAHFHIMLSGAAITGIFSGFYYYFNALFGIKFSRMFGYMHLIYYSGGQWVAFVPQFYLGFSGMPRRIHDYPVVFMGWHSMSTAGHFITLIGIMFFFLMIFDSHIERRAATSSTLGLPRWYKRISYYIFKIRYLQHNKAKMNGIPGSTVRLMLIDRHFAEFEVFKK</sequence>
<proteinExistence type="inferred from homology"/>
<geneLocation type="mitochondrion"/>
<accession>P11947</accession>
<gene>
    <name type="primary">COI</name>
</gene>
<name>COX1_TETPY</name>
<feature type="chain" id="PRO_0000183425" description="Cytochrome c oxidase subunit 1">
    <location>
        <begin position="1"/>
        <end position="698"/>
    </location>
</feature>
<feature type="transmembrane region" description="Helical" evidence="3">
    <location>
        <begin position="65"/>
        <end position="85"/>
    </location>
</feature>
<feature type="transmembrane region" description="Helical" evidence="3">
    <location>
        <begin position="113"/>
        <end position="133"/>
    </location>
</feature>
<feature type="transmembrane region" description="Helical" evidence="3">
    <location>
        <begin position="147"/>
        <end position="167"/>
    </location>
</feature>
<feature type="transmembrane region" description="Helical" evidence="3">
    <location>
        <begin position="304"/>
        <end position="324"/>
    </location>
</feature>
<feature type="transmembrane region" description="Helical" evidence="3">
    <location>
        <begin position="349"/>
        <end position="369"/>
    </location>
</feature>
<feature type="transmembrane region" description="Helical" evidence="3">
    <location>
        <begin position="395"/>
        <end position="415"/>
    </location>
</feature>
<feature type="transmembrane region" description="Helical" evidence="3">
    <location>
        <begin position="434"/>
        <end position="454"/>
    </location>
</feature>
<feature type="transmembrane region" description="Helical" evidence="3">
    <location>
        <begin position="468"/>
        <end position="488"/>
    </location>
</feature>
<feature type="transmembrane region" description="Helical" evidence="3">
    <location>
        <begin position="498"/>
        <end position="518"/>
    </location>
</feature>
<feature type="transmembrane region" description="Helical" evidence="3">
    <location>
        <begin position="533"/>
        <end position="553"/>
    </location>
</feature>
<feature type="transmembrane region" description="Helical" evidence="3">
    <location>
        <begin position="574"/>
        <end position="594"/>
    </location>
</feature>
<feature type="transmembrane region" description="Helical" evidence="3">
    <location>
        <begin position="613"/>
        <end position="633"/>
    </location>
</feature>
<feature type="binding site" evidence="2">
    <location>
        <position position="88"/>
    </location>
    <ligand>
        <name>Ca(2+)</name>
        <dbReference type="ChEBI" id="CHEBI:29108"/>
    </ligand>
</feature>
<feature type="binding site" description="axial binding residue" evidence="2">
    <location>
        <position position="111"/>
    </location>
    <ligand>
        <name>Fe(II)-heme a</name>
        <dbReference type="ChEBI" id="CHEBI:61715"/>
        <note>low-spin</note>
    </ligand>
    <ligandPart>
        <name>Fe</name>
        <dbReference type="ChEBI" id="CHEBI:18248"/>
    </ligandPart>
</feature>
<feature type="binding site" evidence="2">
    <location>
        <position position="401"/>
    </location>
    <ligand>
        <name>Cu cation</name>
        <dbReference type="ChEBI" id="CHEBI:23378"/>
        <label>B</label>
    </ligand>
</feature>
<feature type="binding site" evidence="1">
    <location>
        <position position="405"/>
    </location>
    <ligand>
        <name>O2</name>
        <dbReference type="ChEBI" id="CHEBI:15379"/>
    </ligand>
</feature>
<feature type="binding site" evidence="2">
    <location>
        <position position="450"/>
    </location>
    <ligand>
        <name>Cu cation</name>
        <dbReference type="ChEBI" id="CHEBI:23378"/>
        <label>B</label>
    </ligand>
</feature>
<feature type="binding site" evidence="2">
    <location>
        <position position="451"/>
    </location>
    <ligand>
        <name>Cu cation</name>
        <dbReference type="ChEBI" id="CHEBI:23378"/>
        <label>B</label>
    </ligand>
</feature>
<feature type="binding site" evidence="2">
    <location>
        <position position="528"/>
    </location>
    <ligand>
        <name>Mg(2+)</name>
        <dbReference type="ChEBI" id="CHEBI:18420"/>
        <note>ligand shared with subunit 2</note>
    </ligand>
</feature>
<feature type="binding site" evidence="2">
    <location>
        <position position="529"/>
    </location>
    <ligand>
        <name>Mg(2+)</name>
        <dbReference type="ChEBI" id="CHEBI:18420"/>
        <note>ligand shared with subunit 2</note>
    </ligand>
</feature>
<feature type="binding site" description="axial binding residue" evidence="2">
    <location>
        <position position="536"/>
    </location>
    <ligand>
        <name>heme a3</name>
        <dbReference type="ChEBI" id="CHEBI:83282"/>
        <note>high-spin</note>
    </ligand>
    <ligandPart>
        <name>Fe</name>
        <dbReference type="ChEBI" id="CHEBI:18248"/>
    </ligandPart>
</feature>
<feature type="binding site" description="axial binding residue" evidence="2">
    <location>
        <position position="538"/>
    </location>
    <ligand>
        <name>Fe(II)-heme a</name>
        <dbReference type="ChEBI" id="CHEBI:61715"/>
        <note>low-spin</note>
    </ligand>
    <ligandPart>
        <name>Fe</name>
        <dbReference type="ChEBI" id="CHEBI:18248"/>
    </ligandPart>
</feature>
<feature type="cross-link" description="1'-histidyl-3'-tyrosine (His-Tyr)" evidence="2">
    <location>
        <begin position="401"/>
        <end position="405"/>
    </location>
</feature>
<organism>
    <name type="scientific">Tetrahymena pyriformis</name>
    <dbReference type="NCBI Taxonomy" id="5908"/>
    <lineage>
        <taxon>Eukaryota</taxon>
        <taxon>Sar</taxon>
        <taxon>Alveolata</taxon>
        <taxon>Ciliophora</taxon>
        <taxon>Intramacronucleata</taxon>
        <taxon>Oligohymenophorea</taxon>
        <taxon>Hymenostomatida</taxon>
        <taxon>Tetrahymenina</taxon>
        <taxon>Tetrahymenidae</taxon>
        <taxon>Tetrahymena</taxon>
    </lineage>
</organism>
<evidence type="ECO:0000250" key="1">
    <source>
        <dbReference type="UniProtKB" id="P00396"/>
    </source>
</evidence>
<evidence type="ECO:0000250" key="2">
    <source>
        <dbReference type="UniProtKB" id="P00401"/>
    </source>
</evidence>
<evidence type="ECO:0000255" key="3"/>
<evidence type="ECO:0000305" key="4"/>
<reference key="1">
    <citation type="journal article" date="1987" name="Curr. Genet.">
        <title>The cytochrome oxidase subunit I gene of Tetrahymena: a 57 amino acid NH2-terminal extension and a 108 amino acid insert.</title>
        <authorList>
            <person name="Ziaie Z."/>
            <person name="Suyama Y."/>
        </authorList>
    </citation>
    <scope>NUCLEOTIDE SEQUENCE [GENOMIC DNA]</scope>
    <source>
        <strain>ST</strain>
    </source>
</reference>
<comment type="function">
    <text evidence="2">Component of the cytochrome c oxidase, the last enzyme in the mitochondrial electron transport chain which drives oxidative phosphorylation. The respiratory chain contains 3 multisubunit complexes succinate dehydrogenase (complex II, CII), ubiquinol-cytochrome c oxidoreductase (cytochrome b-c1 complex, complex III, CIII) and cytochrome c oxidase (complex IV, CIV), that cooperate to transfer electrons derived from NADH and succinate to molecular oxygen, creating an electrochemical gradient over the inner membrane that drives transmembrane transport and the ATP synthase. Cytochrome c oxidase is the component of the respiratory chain that catalyzes the reduction of oxygen to water. Electrons originating from reduced cytochrome c in the intermembrane space (IMS) are transferred via the dinuclear copper A center (CU(A)) of subunit 2 and heme A of subunit 1 to the active site in subunit 1, a binuclear center (BNC) formed by heme A3 and copper B (CU(B)). The BNC reduces molecular oxygen to 2 water molecules using 4 electrons from cytochrome c in the IMS and 4 protons from the mitochondrial matrix.</text>
</comment>
<comment type="catalytic activity">
    <reaction evidence="2">
        <text>4 Fe(II)-[cytochrome c] + O2 + 8 H(+)(in) = 4 Fe(III)-[cytochrome c] + 2 H2O + 4 H(+)(out)</text>
        <dbReference type="Rhea" id="RHEA:11436"/>
        <dbReference type="Rhea" id="RHEA-COMP:10350"/>
        <dbReference type="Rhea" id="RHEA-COMP:14399"/>
        <dbReference type="ChEBI" id="CHEBI:15377"/>
        <dbReference type="ChEBI" id="CHEBI:15378"/>
        <dbReference type="ChEBI" id="CHEBI:15379"/>
        <dbReference type="ChEBI" id="CHEBI:29033"/>
        <dbReference type="ChEBI" id="CHEBI:29034"/>
        <dbReference type="EC" id="7.1.1.9"/>
    </reaction>
    <physiologicalReaction direction="left-to-right" evidence="2">
        <dbReference type="Rhea" id="RHEA:11437"/>
    </physiologicalReaction>
</comment>
<comment type="cofactor">
    <cofactor evidence="2">
        <name>heme</name>
        <dbReference type="ChEBI" id="CHEBI:30413"/>
    </cofactor>
    <text evidence="2">Binds 2 heme A groups non-covalently per subunit.</text>
</comment>
<comment type="cofactor">
    <cofactor evidence="2">
        <name>Cu cation</name>
        <dbReference type="ChEBI" id="CHEBI:23378"/>
    </cofactor>
    <text evidence="2">Binds a copper B center.</text>
</comment>
<comment type="pathway">
    <text evidence="2">Energy metabolism; oxidative phosphorylation.</text>
</comment>
<comment type="subunit">
    <text evidence="2">Component of the cytochrome c oxidase (complex IV, CIV), a multisubunit enzyme composed of a catalytic core of 3 subunits and several supernumerary subunits. The complex exists as a monomer or a dimer and forms supercomplexes (SCs) in the inner mitochondrial membrane with ubiquinol-cytochrome c oxidoreductase (cytochrome b-c1 complex, complex III, CIII).</text>
</comment>
<comment type="subcellular location">
    <subcellularLocation>
        <location evidence="2">Mitochondrion inner membrane</location>
        <topology evidence="2">Multi-pass membrane protein</topology>
    </subcellularLocation>
</comment>
<comment type="similarity">
    <text evidence="4">Belongs to the heme-copper respiratory oxidase family.</text>
</comment>
<protein>
    <recommendedName>
        <fullName>Cytochrome c oxidase subunit 1</fullName>
        <ecNumber>7.1.1.9</ecNumber>
    </recommendedName>
    <alternativeName>
        <fullName>Cytochrome c oxidase polypeptide I</fullName>
    </alternativeName>
</protein>
<keyword id="KW-0106">Calcium</keyword>
<keyword id="KW-0186">Copper</keyword>
<keyword id="KW-0249">Electron transport</keyword>
<keyword id="KW-0349">Heme</keyword>
<keyword id="KW-0408">Iron</keyword>
<keyword id="KW-0460">Magnesium</keyword>
<keyword id="KW-0472">Membrane</keyword>
<keyword id="KW-0479">Metal-binding</keyword>
<keyword id="KW-0496">Mitochondrion</keyword>
<keyword id="KW-0999">Mitochondrion inner membrane</keyword>
<keyword id="KW-0679">Respiratory chain</keyword>
<keyword id="KW-1278">Translocase</keyword>
<keyword id="KW-0812">Transmembrane</keyword>
<keyword id="KW-1133">Transmembrane helix</keyword>
<keyword id="KW-0813">Transport</keyword>